<name>CIN2_ARATH</name>
<dbReference type="EC" id="4.2.3.108"/>
<dbReference type="EMBL" id="AY691947">
    <property type="protein sequence ID" value="AAU01970.1"/>
    <property type="molecule type" value="mRNA"/>
</dbReference>
<dbReference type="EMBL" id="AP000599">
    <property type="protein sequence ID" value="BAB01181.1"/>
    <property type="molecule type" value="Genomic_DNA"/>
</dbReference>
<dbReference type="EMBL" id="CP002686">
    <property type="protein sequence ID" value="AEE77075.1"/>
    <property type="molecule type" value="Genomic_DNA"/>
</dbReference>
<dbReference type="EMBL" id="AK229712">
    <property type="protein sequence ID" value="BAF01550.1"/>
    <property type="molecule type" value="mRNA"/>
</dbReference>
<dbReference type="EMBL" id="AK319171">
    <property type="protein sequence ID" value="BAH57286.1"/>
    <property type="molecule type" value="mRNA"/>
</dbReference>
<dbReference type="RefSeq" id="NP_001326843.1">
    <molecule id="P0DI77-2"/>
    <property type="nucleotide sequence ID" value="NM_001338768.1"/>
</dbReference>
<dbReference type="RefSeq" id="NP_001326844.1">
    <molecule id="P0DI77-2"/>
    <property type="nucleotide sequence ID" value="NM_001338769.1"/>
</dbReference>
<dbReference type="RefSeq" id="NP_189210.2">
    <molecule id="P0DI77-1"/>
    <property type="nucleotide sequence ID" value="NM_113483.5"/>
</dbReference>
<dbReference type="RefSeq" id="NP_189212.1">
    <molecule id="P0DI77-1"/>
    <property type="nucleotide sequence ID" value="NM_113485.5"/>
</dbReference>
<dbReference type="SMR" id="P0DI77"/>
<dbReference type="FunCoup" id="P0DI77">
    <property type="interactions" value="120"/>
</dbReference>
<dbReference type="STRING" id="3702.P0DI77"/>
<dbReference type="EnsemblPlants" id="AT3G25820.1">
    <property type="protein sequence ID" value="AT3G25820.1"/>
    <property type="gene ID" value="AT3G25820"/>
</dbReference>
<dbReference type="EnsemblPlants" id="AT3G25820.3">
    <molecule id="P0DI77-2"/>
    <property type="protein sequence ID" value="AT3G25820.3"/>
    <property type="gene ID" value="AT3G25820"/>
</dbReference>
<dbReference type="EnsemblPlants" id="AT3G25820.4">
    <molecule id="P0DI77-2"/>
    <property type="protein sequence ID" value="AT3G25820.4"/>
    <property type="gene ID" value="AT3G25820"/>
</dbReference>
<dbReference type="EnsemblPlants" id="AT3G25830.1">
    <property type="protein sequence ID" value="AT3G25830.1"/>
    <property type="gene ID" value="AT3G25830"/>
</dbReference>
<dbReference type="Gramene" id="AT3G25820.1">
    <property type="protein sequence ID" value="AT3G25820.1"/>
    <property type="gene ID" value="AT3G25820"/>
</dbReference>
<dbReference type="Gramene" id="AT3G25820.3">
    <molecule id="P0DI77-2"/>
    <property type="protein sequence ID" value="AT3G25820.3"/>
    <property type="gene ID" value="AT3G25820"/>
</dbReference>
<dbReference type="Gramene" id="AT3G25820.4">
    <molecule id="P0DI77-2"/>
    <property type="protein sequence ID" value="AT3G25820.4"/>
    <property type="gene ID" value="AT3G25820"/>
</dbReference>
<dbReference type="Gramene" id="AT3G25830.1">
    <property type="protein sequence ID" value="AT3G25830.1"/>
    <property type="gene ID" value="AT3G25830"/>
</dbReference>
<dbReference type="KEGG" id="ath:AT3G25820"/>
<dbReference type="KEGG" id="ath:AT3G25830"/>
<dbReference type="Araport" id="AT3G25830"/>
<dbReference type="TAIR" id="AT3G25830">
    <property type="gene designation" value="TPS-CIN"/>
</dbReference>
<dbReference type="HOGENOM" id="CLU_003125_7_1_1"/>
<dbReference type="InParanoid" id="P0DI77"/>
<dbReference type="OMA" id="YMHETGR"/>
<dbReference type="PhylomeDB" id="P0DI77"/>
<dbReference type="BRENDA" id="4.2.3.108">
    <property type="organism ID" value="399"/>
</dbReference>
<dbReference type="BRENDA" id="4.2.3.109">
    <property type="organism ID" value="399"/>
</dbReference>
<dbReference type="SABIO-RK" id="P0DI77"/>
<dbReference type="UniPathway" id="UPA00213"/>
<dbReference type="PRO" id="PR:P0DI77"/>
<dbReference type="Proteomes" id="UP000006548">
    <property type="component" value="Chromosome 3"/>
</dbReference>
<dbReference type="ExpressionAtlas" id="P0DI77">
    <property type="expression patterns" value="baseline and differential"/>
</dbReference>
<dbReference type="GO" id="GO:0009507">
    <property type="term" value="C:chloroplast"/>
    <property type="evidence" value="ECO:0007669"/>
    <property type="project" value="UniProtKB-SubCell"/>
</dbReference>
<dbReference type="GO" id="GO:0102313">
    <property type="term" value="F:1,8-cineole synthase activity"/>
    <property type="evidence" value="ECO:0007669"/>
    <property type="project" value="UniProtKB-EC"/>
</dbReference>
<dbReference type="GO" id="GO:0000287">
    <property type="term" value="F:magnesium ion binding"/>
    <property type="evidence" value="ECO:0007669"/>
    <property type="project" value="InterPro"/>
</dbReference>
<dbReference type="GO" id="GO:0010333">
    <property type="term" value="F:terpene synthase activity"/>
    <property type="evidence" value="ECO:0007669"/>
    <property type="project" value="InterPro"/>
</dbReference>
<dbReference type="GO" id="GO:0016102">
    <property type="term" value="P:diterpenoid biosynthetic process"/>
    <property type="evidence" value="ECO:0007669"/>
    <property type="project" value="InterPro"/>
</dbReference>
<dbReference type="CDD" id="cd00684">
    <property type="entry name" value="Terpene_cyclase_plant_C1"/>
    <property type="match status" value="1"/>
</dbReference>
<dbReference type="FunFam" id="1.10.600.10:FF:000007">
    <property type="entry name" value="Isoprene synthase, chloroplastic"/>
    <property type="match status" value="1"/>
</dbReference>
<dbReference type="Gene3D" id="1.10.600.10">
    <property type="entry name" value="Farnesyl Diphosphate Synthase"/>
    <property type="match status" value="1"/>
</dbReference>
<dbReference type="Gene3D" id="1.50.10.130">
    <property type="entry name" value="Terpene synthase, N-terminal domain"/>
    <property type="match status" value="1"/>
</dbReference>
<dbReference type="InterPro" id="IPR008949">
    <property type="entry name" value="Isoprenoid_synthase_dom_sf"/>
</dbReference>
<dbReference type="InterPro" id="IPR034741">
    <property type="entry name" value="Terpene_cyclase-like_1_C"/>
</dbReference>
<dbReference type="InterPro" id="IPR044814">
    <property type="entry name" value="Terpene_cyclase_plant_C1"/>
</dbReference>
<dbReference type="InterPro" id="IPR001906">
    <property type="entry name" value="Terpene_synth_N"/>
</dbReference>
<dbReference type="InterPro" id="IPR036965">
    <property type="entry name" value="Terpene_synth_N_sf"/>
</dbReference>
<dbReference type="InterPro" id="IPR050148">
    <property type="entry name" value="Terpene_synthase-like"/>
</dbReference>
<dbReference type="InterPro" id="IPR005630">
    <property type="entry name" value="Terpene_synthase_metal-bd"/>
</dbReference>
<dbReference type="InterPro" id="IPR008930">
    <property type="entry name" value="Terpenoid_cyclase/PrenylTrfase"/>
</dbReference>
<dbReference type="PANTHER" id="PTHR31225:SF244">
    <property type="entry name" value="1,8-CINEOLE SYNTHASE 1, CHLOROPLASTIC-RELATED"/>
    <property type="match status" value="1"/>
</dbReference>
<dbReference type="PANTHER" id="PTHR31225">
    <property type="entry name" value="OS04G0344100 PROTEIN-RELATED"/>
    <property type="match status" value="1"/>
</dbReference>
<dbReference type="Pfam" id="PF01397">
    <property type="entry name" value="Terpene_synth"/>
    <property type="match status" value="1"/>
</dbReference>
<dbReference type="Pfam" id="PF03936">
    <property type="entry name" value="Terpene_synth_C"/>
    <property type="match status" value="1"/>
</dbReference>
<dbReference type="SFLD" id="SFLDS00005">
    <property type="entry name" value="Isoprenoid_Synthase_Type_I"/>
    <property type="match status" value="1"/>
</dbReference>
<dbReference type="SFLD" id="SFLDG01019">
    <property type="entry name" value="Terpene_Cyclase_Like_1_C_Termi"/>
    <property type="match status" value="1"/>
</dbReference>
<dbReference type="SUPFAM" id="SSF48239">
    <property type="entry name" value="Terpenoid cyclases/Protein prenyltransferases"/>
    <property type="match status" value="1"/>
</dbReference>
<dbReference type="SUPFAM" id="SSF48576">
    <property type="entry name" value="Terpenoid synthases"/>
    <property type="match status" value="1"/>
</dbReference>
<keyword id="KW-0025">Alternative splicing</keyword>
<keyword id="KW-0150">Chloroplast</keyword>
<keyword id="KW-0456">Lyase</keyword>
<keyword id="KW-0460">Magnesium</keyword>
<keyword id="KW-0464">Manganese</keyword>
<keyword id="KW-0479">Metal-binding</keyword>
<keyword id="KW-0934">Plastid</keyword>
<keyword id="KW-1185">Reference proteome</keyword>
<keyword id="KW-0809">Transit peptide</keyword>
<gene>
    <name type="primary">TPS23</name>
    <name type="synonym">TPS-CIN2</name>
    <name type="ordered locus">At3g25830</name>
    <name type="ORF">K9I22.3</name>
</gene>
<organism>
    <name type="scientific">Arabidopsis thaliana</name>
    <name type="common">Mouse-ear cress</name>
    <dbReference type="NCBI Taxonomy" id="3702"/>
    <lineage>
        <taxon>Eukaryota</taxon>
        <taxon>Viridiplantae</taxon>
        <taxon>Streptophyta</taxon>
        <taxon>Embryophyta</taxon>
        <taxon>Tracheophyta</taxon>
        <taxon>Spermatophyta</taxon>
        <taxon>Magnoliopsida</taxon>
        <taxon>eudicotyledons</taxon>
        <taxon>Gunneridae</taxon>
        <taxon>Pentapetalae</taxon>
        <taxon>rosids</taxon>
        <taxon>malvids</taxon>
        <taxon>Brassicales</taxon>
        <taxon>Brassicaceae</taxon>
        <taxon>Camelineae</taxon>
        <taxon>Arabidopsis</taxon>
    </lineage>
</organism>
<protein>
    <recommendedName>
        <fullName>1,8-cineole synthase 2, chloroplastic</fullName>
        <shortName>AtTPS-CIN2</shortName>
        <ecNumber>4.2.3.108</ecNumber>
    </recommendedName>
    <alternativeName>
        <fullName>Limonene cyclase</fullName>
    </alternativeName>
    <alternativeName>
        <fullName>Terpenoid synthase 23</fullName>
        <shortName>AtTPS23</shortName>
    </alternativeName>
</protein>
<evidence type="ECO:0000250" key="1">
    <source>
        <dbReference type="UniProtKB" id="A0A1C9J6A7"/>
    </source>
</evidence>
<evidence type="ECO:0000250" key="2">
    <source>
        <dbReference type="UniProtKB" id="Q40577"/>
    </source>
</evidence>
<evidence type="ECO:0000255" key="3"/>
<evidence type="ECO:0000269" key="4">
    <source>
    </source>
</evidence>
<evidence type="ECO:0000269" key="5">
    <source>
    </source>
</evidence>
<evidence type="ECO:0000303" key="6">
    <source>
    </source>
</evidence>
<evidence type="ECO:0000303" key="7">
    <source ref="4"/>
</evidence>
<evidence type="ECO:0000305" key="8"/>
<reference key="1">
    <citation type="journal article" date="2004" name="Plant Physiol.">
        <title>Characterization of a root-specific Arabidopsis terpene synthase responsible for the formation of the volatile monoterpene 1,8-cineole.</title>
        <authorList>
            <person name="Chen F."/>
            <person name="Ro D.K."/>
            <person name="Petri J."/>
            <person name="Gershenzon J."/>
            <person name="Bohlmann J."/>
            <person name="Pichersky E."/>
            <person name="Tholl D."/>
        </authorList>
    </citation>
    <scope>NUCLEOTIDE SEQUENCE [MRNA] (ISOFORM 1)</scope>
    <scope>FUNCTION</scope>
    <scope>CATALYTIC ACTIVITY</scope>
    <scope>TISSUE SPECIFICITY</scope>
    <scope>INDUCTION</scope>
    <scope>BIOPHYSICOCHEMICAL PROPERTIES</scope>
</reference>
<reference key="2">
    <citation type="journal article" date="2000" name="DNA Res.">
        <title>Structural analysis of Arabidopsis thaliana chromosome 3. II. Sequence features of the 4,251,695 bp regions covered by 90 P1, TAC and BAC clones.</title>
        <authorList>
            <person name="Kaneko T."/>
            <person name="Katoh T."/>
            <person name="Sato S."/>
            <person name="Nakamura Y."/>
            <person name="Asamizu E."/>
            <person name="Tabata S."/>
        </authorList>
    </citation>
    <scope>NUCLEOTIDE SEQUENCE [LARGE SCALE GENOMIC DNA]</scope>
    <source>
        <strain>cv. Columbia</strain>
    </source>
</reference>
<reference key="3">
    <citation type="journal article" date="2017" name="Plant J.">
        <title>Araport11: a complete reannotation of the Arabidopsis thaliana reference genome.</title>
        <authorList>
            <person name="Cheng C.Y."/>
            <person name="Krishnakumar V."/>
            <person name="Chan A.P."/>
            <person name="Thibaud-Nissen F."/>
            <person name="Schobel S."/>
            <person name="Town C.D."/>
        </authorList>
    </citation>
    <scope>GENOME REANNOTATION</scope>
    <source>
        <strain>cv. Columbia</strain>
    </source>
</reference>
<reference key="4">
    <citation type="submission" date="2006-07" db="EMBL/GenBank/DDBJ databases">
        <title>Large-scale analysis of RIKEN Arabidopsis full-length (RAFL) cDNAs.</title>
        <authorList>
            <person name="Totoki Y."/>
            <person name="Seki M."/>
            <person name="Ishida J."/>
            <person name="Nakajima M."/>
            <person name="Enju A."/>
            <person name="Kamiya A."/>
            <person name="Narusaka M."/>
            <person name="Shin-i T."/>
            <person name="Nakagawa M."/>
            <person name="Sakamoto N."/>
            <person name="Oishi K."/>
            <person name="Kohara Y."/>
            <person name="Kobayashi M."/>
            <person name="Toyoda A."/>
            <person name="Sakaki Y."/>
            <person name="Sakurai T."/>
            <person name="Iida K."/>
            <person name="Akiyama K."/>
            <person name="Satou M."/>
            <person name="Toyoda T."/>
            <person name="Konagaya A."/>
            <person name="Carninci P."/>
            <person name="Kawai J."/>
            <person name="Hayashizaki Y."/>
            <person name="Shinozaki K."/>
        </authorList>
    </citation>
    <scope>NUCLEOTIDE SEQUENCE [LARGE SCALE MRNA] (ISOFORM 2)</scope>
    <source>
        <strain>cv. Columbia</strain>
    </source>
</reference>
<reference key="5">
    <citation type="journal article" date="2009" name="DNA Res.">
        <title>Analysis of multiple occurrences of alternative splicing events in Arabidopsis thaliana using novel sequenced full-length cDNAs.</title>
        <authorList>
            <person name="Iida K."/>
            <person name="Fukami-Kobayashi K."/>
            <person name="Toyoda A."/>
            <person name="Sakaki Y."/>
            <person name="Kobayashi M."/>
            <person name="Seki M."/>
            <person name="Shinozaki K."/>
        </authorList>
    </citation>
    <scope>NUCLEOTIDE SEQUENCE [LARGE SCALE MRNA] (ISOFORM 2)</scope>
    <source>
        <strain>cv. Columbia</strain>
        <tissue>Rosette leaf</tissue>
    </source>
</reference>
<reference key="6">
    <citation type="journal article" date="2002" name="Mol. Genet. Genomics">
        <title>Genomic analysis of the terpenoid synthase (AtTPS) gene family of Arabidopsis thaliana.</title>
        <authorList>
            <person name="Aubourg S."/>
            <person name="Lecharny A."/>
            <person name="Bohlmann J."/>
        </authorList>
    </citation>
    <scope>IDENTIFICATION</scope>
    <scope>GENE FAMILY</scope>
    <scope>NOMENCLATURE</scope>
</reference>
<reference key="7">
    <citation type="journal article" date="2003" name="Plant Cell">
        <title>Biosynthesis and emission of terpenoid volatiles from Arabidopsis flowers.</title>
        <authorList>
            <person name="Chen F."/>
            <person name="Tholl D."/>
            <person name="D'Auria J.C."/>
            <person name="Farooq A."/>
            <person name="Pichersky E."/>
            <person name="Gershenzon J."/>
        </authorList>
    </citation>
    <scope>TISSUE SPECIFICITY</scope>
</reference>
<reference key="8">
    <citation type="journal article" date="2003" name="Plant Mol. Biol.">
        <title>Genome organization in Arabidopsis thaliana: a survey for genes involved in isoprenoid and chlorophyll metabolism.</title>
        <authorList>
            <person name="Lange B.M."/>
            <person name="Ghassemian M."/>
        </authorList>
    </citation>
    <scope>GENE FAMILY</scope>
</reference>
<sequence>MATLRISSALIYQNTLTHHFRLRRPHRFVCKSMTKTTPDTTLVELSRRSGNYQPSPWNHCYLLSIENKYASETEVITRDVLKKKVKSMLDDEKKSRLEQLELIDDLQKLGVSYHFEIEINDTLTDLHLKMGRNCWKCDKEEDLHATSLEFRLLRQHGFDVSENIFDVIIDQIESNTFKTNNINGIISLYEASYLSTKSDTKLHKVIRPFATEQIRKFVDDEDTKNIEVREKAYHALEMPYHWRMRRLDTRWYIDAYEKKHDMNLVLIEFAKIDFNIVQAAHQEDLKYVSRWWKDTCLTNQLPFVRDRIVENYFWTVGLIYEPQFGYIRRIMTIVNALVTTIDDIYDIYGTLEELELFTSMVENWDVNRLGELPEYMRLCFLILYNEINGIGCDILKYKKIDVIPYLKKSWADLCRTYLVEAKWYKRGYKPSLEEYMQNAWISISAPTILIHFYCVFSDQISVQNLETLSQHRQHIVRCSATVLRLANDLGTSPTELARGDVLKSVQCYMHETGASEERARDHVHQMISDMWDDMNSETKTACNSSSRSRGFKEAAMNLARMSQCMYQYGDGHGCPEKAKTIDRVQSLLVDPIPLDVNRLG</sequence>
<accession>P0DI77</accession>
<accession>C0Z3K7</accession>
<accession>Q0WMV0</accession>
<accession>Q9LDF1</accession>
<comment type="function">
    <text evidence="5">Involved in monoterpene (C10) biosynthesis. The major product is 1,8-cineole (52%) followed by minor amounts of sabinene (14.5%), myrcene (13.3%), (-)-(1S)-beta-pinene (7.8%), (-)-(4S)-limonene (4.0%), (E)-beta-ocimene (2.7%), alpha-terpineol (2.4%), (-)-(1S)-alpha-pinene (1.9%), terpinolene (0.8%), and (+)-alpha-thujene (0.6%).</text>
</comment>
<comment type="catalytic activity">
    <reaction evidence="5">
        <text>(2E)-geranyl diphosphate + H2O = 1,8-cineole + diphosphate</text>
        <dbReference type="Rhea" id="RHEA:32543"/>
        <dbReference type="ChEBI" id="CHEBI:15377"/>
        <dbReference type="ChEBI" id="CHEBI:27961"/>
        <dbReference type="ChEBI" id="CHEBI:33019"/>
        <dbReference type="ChEBI" id="CHEBI:58057"/>
        <dbReference type="EC" id="4.2.3.108"/>
    </reaction>
</comment>
<comment type="cofactor">
    <cofactor evidence="1">
        <name>Mg(2+)</name>
        <dbReference type="ChEBI" id="CHEBI:18420"/>
    </cofactor>
    <cofactor evidence="1">
        <name>Mn(2+)</name>
        <dbReference type="ChEBI" id="CHEBI:29035"/>
    </cofactor>
    <text evidence="1">Binds 3 Mg(2+) or Mn(2+) ions per subunit.</text>
</comment>
<comment type="biophysicochemical properties">
    <kinetics>
        <KM evidence="5">0.2 uM for geranyl diphosphate</KM>
        <Vmax evidence="5">10.9 pmol/sec/mg enzyme toward geranyl diphosphate</Vmax>
    </kinetics>
    <phDependence>
        <text evidence="5">Optimum pH is 8.0.</text>
    </phDependence>
</comment>
<comment type="pathway">
    <text>Secondary metabolite biosynthesis; terpenoid biosynthesis.</text>
</comment>
<comment type="subcellular location">
    <subcellularLocation>
        <location evidence="8">Plastid</location>
        <location evidence="8">Chloroplast</location>
    </subcellularLocation>
</comment>
<comment type="alternative products">
    <event type="alternative splicing"/>
    <isoform>
        <id>P0DI77-1</id>
        <name>1</name>
        <sequence type="displayed"/>
    </isoform>
    <isoform>
        <id>P0DI77-2</id>
        <name>2</name>
        <sequence type="described" ref="VSP_044205 VSP_044206"/>
    </isoform>
</comment>
<comment type="tissue specificity">
    <text evidence="4 5">Predominantly expressed in roots and at much lower levels in siliques. Not found in leaves, flowers or stems. Also detected in flowers in cv. Landsberg erecta. Not expressed in root apical meristem and elongation zone. Found in the vascular system of young roots and additionally in the cortex and epidermal cell layer of older roots.</text>
</comment>
<comment type="induction">
    <text evidence="5">Not induces in aerial parts by treatments with jasmonic acid, 6-ethyl indanoyl-L-Ile, fungal peptaibol elicitor alamethicin or herbivory.</text>
</comment>
<comment type="domain">
    <text evidence="2">The Asp-Asp-Xaa-Xaa-Asp/Glu (DDXXD/E) motif is important for the catalytic activity, presumably through binding to Mg(2+).</text>
</comment>
<comment type="miscellaneous">
    <molecule>Isoform 2</molecule>
    <text evidence="8">May be due to intron retention.</text>
</comment>
<comment type="similarity">
    <text evidence="8">Belongs to the terpene synthase family. Tpsb subfamily.</text>
</comment>
<proteinExistence type="evidence at protein level"/>
<feature type="transit peptide" description="Chloroplast" evidence="3">
    <location>
        <begin position="1"/>
        <end position="31"/>
    </location>
</feature>
<feature type="chain" id="PRO_0000419502" description="1,8-cineole synthase 2, chloroplastic">
    <location>
        <begin position="32"/>
        <end position="600"/>
    </location>
</feature>
<feature type="short sequence motif" description="DDXXD motif" evidence="2">
    <location>
        <begin position="342"/>
        <end position="346"/>
    </location>
</feature>
<feature type="binding site" evidence="2">
    <location>
        <position position="305"/>
    </location>
    <ligand>
        <name>(2E)-geranyl diphosphate</name>
        <dbReference type="ChEBI" id="CHEBI:58057"/>
    </ligand>
</feature>
<feature type="binding site" evidence="2">
    <location>
        <position position="342"/>
    </location>
    <ligand>
        <name>(2E)-geranyl diphosphate</name>
        <dbReference type="ChEBI" id="CHEBI:58057"/>
    </ligand>
</feature>
<feature type="binding site" evidence="2">
    <location>
        <position position="342"/>
    </location>
    <ligand>
        <name>Mg(2+)</name>
        <dbReference type="ChEBI" id="CHEBI:18420"/>
        <label>1</label>
    </ligand>
</feature>
<feature type="binding site" evidence="2">
    <location>
        <position position="342"/>
    </location>
    <ligand>
        <name>Mg(2+)</name>
        <dbReference type="ChEBI" id="CHEBI:18420"/>
        <label>2</label>
    </ligand>
</feature>
<feature type="binding site" evidence="2">
    <location>
        <position position="346"/>
    </location>
    <ligand>
        <name>(2E)-geranyl diphosphate</name>
        <dbReference type="ChEBI" id="CHEBI:58057"/>
    </ligand>
</feature>
<feature type="binding site" evidence="2">
    <location>
        <position position="346"/>
    </location>
    <ligand>
        <name>Mg(2+)</name>
        <dbReference type="ChEBI" id="CHEBI:18420"/>
        <label>1</label>
    </ligand>
</feature>
<feature type="binding site" evidence="2">
    <location>
        <position position="346"/>
    </location>
    <ligand>
        <name>Mg(2+)</name>
        <dbReference type="ChEBI" id="CHEBI:18420"/>
        <label>2</label>
    </ligand>
</feature>
<feature type="binding site" evidence="2">
    <location>
        <position position="484"/>
    </location>
    <ligand>
        <name>(2E)-geranyl diphosphate</name>
        <dbReference type="ChEBI" id="CHEBI:58057"/>
    </ligand>
</feature>
<feature type="binding site" evidence="2">
    <location>
        <position position="487"/>
    </location>
    <ligand>
        <name>(2E)-geranyl diphosphate</name>
        <dbReference type="ChEBI" id="CHEBI:58057"/>
    </ligand>
</feature>
<feature type="binding site" evidence="2">
    <location>
        <position position="487"/>
    </location>
    <ligand>
        <name>Mg(2+)</name>
        <dbReference type="ChEBI" id="CHEBI:18420"/>
        <label>3</label>
    </ligand>
</feature>
<feature type="binding site" evidence="2">
    <location>
        <position position="491"/>
    </location>
    <ligand>
        <name>Mg(2+)</name>
        <dbReference type="ChEBI" id="CHEBI:18420"/>
        <label>3</label>
    </ligand>
</feature>
<feature type="binding site" evidence="2">
    <location>
        <position position="495"/>
    </location>
    <ligand>
        <name>Mg(2+)</name>
        <dbReference type="ChEBI" id="CHEBI:18420"/>
        <label>3</label>
    </ligand>
</feature>
<feature type="splice variant" id="VSP_044205" description="In isoform 2." evidence="6 7">
    <original>NWDVNRLGELPEYMRLCFLILYNEINGIGCDIL</original>
    <variation>KLRNILPFFGQSIGYFAAVPWSTTRPLLQKSST</variation>
    <location>
        <begin position="363"/>
        <end position="395"/>
    </location>
</feature>
<feature type="splice variant" id="VSP_044206" description="In isoform 2." evidence="6 7">
    <location>
        <begin position="396"/>
        <end position="600"/>
    </location>
</feature>